<gene>
    <name type="primary">bot1</name>
    <name type="ORF">SPBC14C8.16c</name>
</gene>
<feature type="transit peptide" description="Mitochondrion" evidence="2">
    <location>
        <begin position="1"/>
        <end position="66"/>
    </location>
</feature>
<feature type="chain" id="PRO_0000372637" description="Small ribosomal subunit protein mS45">
    <location>
        <begin position="67"/>
        <end position="315"/>
    </location>
</feature>
<dbReference type="EMBL" id="AF352796">
    <property type="protein sequence ID" value="AAN23002.1"/>
    <property type="molecule type" value="mRNA"/>
</dbReference>
<dbReference type="EMBL" id="CU329671">
    <property type="protein sequence ID" value="CAA18433.1"/>
    <property type="molecule type" value="Genomic_DNA"/>
</dbReference>
<dbReference type="PIR" id="T39444">
    <property type="entry name" value="T39444"/>
</dbReference>
<dbReference type="RefSeq" id="NP_595919.1">
    <property type="nucleotide sequence ID" value="NM_001021827.2"/>
</dbReference>
<dbReference type="SMR" id="O60096"/>
<dbReference type="BioGRID" id="276530">
    <property type="interactions" value="4"/>
</dbReference>
<dbReference type="ComplexPortal" id="CPX-10315">
    <property type="entry name" value="37S mitochondrial small ribosomal subunit"/>
</dbReference>
<dbReference type="FunCoup" id="O60096">
    <property type="interactions" value="45"/>
</dbReference>
<dbReference type="STRING" id="284812.O60096"/>
<dbReference type="iPTMnet" id="O60096"/>
<dbReference type="PaxDb" id="4896-SPBC14C8.16c.1"/>
<dbReference type="EnsemblFungi" id="SPBC14C8.16c.1">
    <property type="protein sequence ID" value="SPBC14C8.16c.1:pep"/>
    <property type="gene ID" value="SPBC14C8.16c"/>
</dbReference>
<dbReference type="GeneID" id="2539986"/>
<dbReference type="KEGG" id="spo:2539986"/>
<dbReference type="PomBase" id="SPBC14C8.16c">
    <property type="gene designation" value="bot1"/>
</dbReference>
<dbReference type="VEuPathDB" id="FungiDB:SPBC14C8.16c"/>
<dbReference type="eggNOG" id="ENOG502SGD4">
    <property type="taxonomic scope" value="Eukaryota"/>
</dbReference>
<dbReference type="HOGENOM" id="CLU_927995_0_0_1"/>
<dbReference type="InParanoid" id="O60096"/>
<dbReference type="OMA" id="YKTCPQR"/>
<dbReference type="PhylomeDB" id="O60096"/>
<dbReference type="PRO" id="PR:O60096"/>
<dbReference type="Proteomes" id="UP000002485">
    <property type="component" value="Chromosome II"/>
</dbReference>
<dbReference type="GO" id="GO:0005763">
    <property type="term" value="C:mitochondrial small ribosomal subunit"/>
    <property type="evidence" value="ECO:0000314"/>
    <property type="project" value="PomBase"/>
</dbReference>
<dbReference type="GO" id="GO:0003735">
    <property type="term" value="F:structural constituent of ribosome"/>
    <property type="evidence" value="ECO:0000318"/>
    <property type="project" value="GO_Central"/>
</dbReference>
<dbReference type="GO" id="GO:0032543">
    <property type="term" value="P:mitochondrial translation"/>
    <property type="evidence" value="ECO:0000315"/>
    <property type="project" value="PomBase"/>
</dbReference>
<dbReference type="InterPro" id="IPR021036">
    <property type="entry name" value="Ribosomal_mS45"/>
</dbReference>
<dbReference type="PANTHER" id="PTHR28158">
    <property type="entry name" value="37S RIBOSOMAL PROTEIN S35, MITOCHONDRIAL"/>
    <property type="match status" value="1"/>
</dbReference>
<dbReference type="PANTHER" id="PTHR28158:SF1">
    <property type="entry name" value="SMALL RIBOSOMAL SUBUNIT PROTEIN MS45"/>
    <property type="match status" value="1"/>
</dbReference>
<dbReference type="Pfam" id="PF12298">
    <property type="entry name" value="Bot1p"/>
    <property type="match status" value="1"/>
</dbReference>
<proteinExistence type="evidence at transcript level"/>
<organism>
    <name type="scientific">Schizosaccharomyces pombe (strain 972 / ATCC 24843)</name>
    <name type="common">Fission yeast</name>
    <dbReference type="NCBI Taxonomy" id="284812"/>
    <lineage>
        <taxon>Eukaryota</taxon>
        <taxon>Fungi</taxon>
        <taxon>Dikarya</taxon>
        <taxon>Ascomycota</taxon>
        <taxon>Taphrinomycotina</taxon>
        <taxon>Schizosaccharomycetes</taxon>
        <taxon>Schizosaccharomycetales</taxon>
        <taxon>Schizosaccharomycetaceae</taxon>
        <taxon>Schizosaccharomyces</taxon>
    </lineage>
</organism>
<evidence type="ECO:0000250" key="1">
    <source>
        <dbReference type="UniProtKB" id="P53292"/>
    </source>
</evidence>
<evidence type="ECO:0000255" key="2"/>
<evidence type="ECO:0000269" key="3">
    <source>
    </source>
</evidence>
<evidence type="ECO:0000305" key="4"/>
<keyword id="KW-0496">Mitochondrion</keyword>
<keyword id="KW-1185">Reference proteome</keyword>
<keyword id="KW-0687">Ribonucleoprotein</keyword>
<keyword id="KW-0689">Ribosomal protein</keyword>
<keyword id="KW-0809">Transit peptide</keyword>
<sequence>MRNSVEFSQLGLKTAFNLSQNKTYTSAVKKQFFSTGAFLSNGGNIDLNKHTQKNIDSKYVACNSRSVTPPNDVASSVSKNTLRHKQRLMMAQWLMSPEVQKAKSSSSGNVGLGPNTNQPFPLNPFFKPPRPISHSLRMKITDEYLQGASIEVLARKFNTSPQRIEALIKLRRINDEFEEKKKPILHSYNEVMEKMLNACTKPEMMQFNDGNDIPLRSNPVSLWKSLPEGETFTPQEAAKILKWPSIEELNMRQNATHFHKTSDEHKDLNEDEELISSSPSEVGKRVFRLIDLSTGNVYRRDTGGDIYVKRKKSTT</sequence>
<comment type="function">
    <text evidence="1 3">Component of the mitochondrial ribosome (mitoribosome), a dedicated translation machinery responsible for the synthesis of mitochondrial genome-encoded proteins, including at least some of the essential transmembrane subunits of the mitochondrial respiratory chain. The mitoribosomes are attached to the mitochondrial inner membrane and translation products are cotranslationally integrated into the membrane (By similarity). Required for mitochondrial protein synthesis. Has a role in mitochondrial integrity and cell respiration (PubMed:18245278).</text>
</comment>
<comment type="subunit">
    <text evidence="1">Component of the mitochondrial small ribosomal subunit (mt-SSU). Mature yeast 74S mitochondrial ribosomes consist of a small (37S) and a large (54S) subunit. The 37S small subunit contains a 15S ribosomal RNA (15S mt-rRNA) and at least 32 different proteins. The 54S large subunit contains a 21S rRNA (21S mt-rRNA) and at least 45 different proteins.</text>
</comment>
<comment type="subcellular location">
    <subcellularLocation>
        <location evidence="3">Mitochondrion</location>
    </subcellularLocation>
</comment>
<comment type="similarity">
    <text evidence="4">Belongs to the mitochondrion-specific ribosomal protein mS45 family.</text>
</comment>
<protein>
    <recommendedName>
        <fullName evidence="4">Small ribosomal subunit protein mS45</fullName>
    </recommendedName>
    <alternativeName>
        <fullName>37S ribosomal protein S35, mitochondrial</fullName>
    </alternativeName>
</protein>
<reference key="1">
    <citation type="journal article" date="2008" name="Eukaryot. Cell">
        <title>Bot1p is required for mitochondrial translation, respiratory function, and normal cell morphology in the fission yeast Schizosaccharomyces pombe.</title>
        <authorList>
            <person name="Wiley D.J."/>
            <person name="Catanuto P."/>
            <person name="Fontanesi F."/>
            <person name="Rios C."/>
            <person name="Sanchez N."/>
            <person name="Barrientos A."/>
            <person name="Verde F."/>
        </authorList>
    </citation>
    <scope>NUCLEOTIDE SEQUENCE [MRNA]</scope>
    <scope>FUNCTION</scope>
    <scope>SUBCELLULAR LOCATION</scope>
</reference>
<reference key="2">
    <citation type="journal article" date="2002" name="Nature">
        <title>The genome sequence of Schizosaccharomyces pombe.</title>
        <authorList>
            <person name="Wood V."/>
            <person name="Gwilliam R."/>
            <person name="Rajandream M.A."/>
            <person name="Lyne M.H."/>
            <person name="Lyne R."/>
            <person name="Stewart A."/>
            <person name="Sgouros J.G."/>
            <person name="Peat N."/>
            <person name="Hayles J."/>
            <person name="Baker S.G."/>
            <person name="Basham D."/>
            <person name="Bowman S."/>
            <person name="Brooks K."/>
            <person name="Brown D."/>
            <person name="Brown S."/>
            <person name="Chillingworth T."/>
            <person name="Churcher C.M."/>
            <person name="Collins M."/>
            <person name="Connor R."/>
            <person name="Cronin A."/>
            <person name="Davis P."/>
            <person name="Feltwell T."/>
            <person name="Fraser A."/>
            <person name="Gentles S."/>
            <person name="Goble A."/>
            <person name="Hamlin N."/>
            <person name="Harris D.E."/>
            <person name="Hidalgo J."/>
            <person name="Hodgson G."/>
            <person name="Holroyd S."/>
            <person name="Hornsby T."/>
            <person name="Howarth S."/>
            <person name="Huckle E.J."/>
            <person name="Hunt S."/>
            <person name="Jagels K."/>
            <person name="James K.D."/>
            <person name="Jones L."/>
            <person name="Jones M."/>
            <person name="Leather S."/>
            <person name="McDonald S."/>
            <person name="McLean J."/>
            <person name="Mooney P."/>
            <person name="Moule S."/>
            <person name="Mungall K.L."/>
            <person name="Murphy L.D."/>
            <person name="Niblett D."/>
            <person name="Odell C."/>
            <person name="Oliver K."/>
            <person name="O'Neil S."/>
            <person name="Pearson D."/>
            <person name="Quail M.A."/>
            <person name="Rabbinowitsch E."/>
            <person name="Rutherford K.M."/>
            <person name="Rutter S."/>
            <person name="Saunders D."/>
            <person name="Seeger K."/>
            <person name="Sharp S."/>
            <person name="Skelton J."/>
            <person name="Simmonds M.N."/>
            <person name="Squares R."/>
            <person name="Squares S."/>
            <person name="Stevens K."/>
            <person name="Taylor K."/>
            <person name="Taylor R.G."/>
            <person name="Tivey A."/>
            <person name="Walsh S.V."/>
            <person name="Warren T."/>
            <person name="Whitehead S."/>
            <person name="Woodward J.R."/>
            <person name="Volckaert G."/>
            <person name="Aert R."/>
            <person name="Robben J."/>
            <person name="Grymonprez B."/>
            <person name="Weltjens I."/>
            <person name="Vanstreels E."/>
            <person name="Rieger M."/>
            <person name="Schaefer M."/>
            <person name="Mueller-Auer S."/>
            <person name="Gabel C."/>
            <person name="Fuchs M."/>
            <person name="Duesterhoeft A."/>
            <person name="Fritzc C."/>
            <person name="Holzer E."/>
            <person name="Moestl D."/>
            <person name="Hilbert H."/>
            <person name="Borzym K."/>
            <person name="Langer I."/>
            <person name="Beck A."/>
            <person name="Lehrach H."/>
            <person name="Reinhardt R."/>
            <person name="Pohl T.M."/>
            <person name="Eger P."/>
            <person name="Zimmermann W."/>
            <person name="Wedler H."/>
            <person name="Wambutt R."/>
            <person name="Purnelle B."/>
            <person name="Goffeau A."/>
            <person name="Cadieu E."/>
            <person name="Dreano S."/>
            <person name="Gloux S."/>
            <person name="Lelaure V."/>
            <person name="Mottier S."/>
            <person name="Galibert F."/>
            <person name="Aves S.J."/>
            <person name="Xiang Z."/>
            <person name="Hunt C."/>
            <person name="Moore K."/>
            <person name="Hurst S.M."/>
            <person name="Lucas M."/>
            <person name="Rochet M."/>
            <person name="Gaillardin C."/>
            <person name="Tallada V.A."/>
            <person name="Garzon A."/>
            <person name="Thode G."/>
            <person name="Daga R.R."/>
            <person name="Cruzado L."/>
            <person name="Jimenez J."/>
            <person name="Sanchez M."/>
            <person name="del Rey F."/>
            <person name="Benito J."/>
            <person name="Dominguez A."/>
            <person name="Revuelta J.L."/>
            <person name="Moreno S."/>
            <person name="Armstrong J."/>
            <person name="Forsburg S.L."/>
            <person name="Cerutti L."/>
            <person name="Lowe T."/>
            <person name="McCombie W.R."/>
            <person name="Paulsen I."/>
            <person name="Potashkin J."/>
            <person name="Shpakovski G.V."/>
            <person name="Ussery D."/>
            <person name="Barrell B.G."/>
            <person name="Nurse P."/>
        </authorList>
    </citation>
    <scope>NUCLEOTIDE SEQUENCE [LARGE SCALE GENOMIC DNA]</scope>
    <source>
        <strain>972 / ATCC 24843</strain>
    </source>
</reference>
<accession>O60096</accession>
<name>RT35_SCHPO</name>